<accession>C1AYY2</accession>
<evidence type="ECO:0000255" key="1">
    <source>
        <dbReference type="HAMAP-Rule" id="MF_00632"/>
    </source>
</evidence>
<dbReference type="EMBL" id="AP011115">
    <property type="protein sequence ID" value="BAH49910.1"/>
    <property type="molecule type" value="Genomic_DNA"/>
</dbReference>
<dbReference type="RefSeq" id="WP_012688873.1">
    <property type="nucleotide sequence ID" value="NC_012522.1"/>
</dbReference>
<dbReference type="SMR" id="C1AYY2"/>
<dbReference type="STRING" id="632772.ROP_16630"/>
<dbReference type="KEGG" id="rop:ROP_16630"/>
<dbReference type="PATRIC" id="fig|632772.20.peg.1744"/>
<dbReference type="HOGENOM" id="CLU_099839_0_0_11"/>
<dbReference type="OrthoDB" id="9801447at2"/>
<dbReference type="Proteomes" id="UP000002212">
    <property type="component" value="Chromosome"/>
</dbReference>
<dbReference type="GO" id="GO:0005829">
    <property type="term" value="C:cytosol"/>
    <property type="evidence" value="ECO:0007669"/>
    <property type="project" value="TreeGrafter"/>
</dbReference>
<dbReference type="GO" id="GO:0000166">
    <property type="term" value="F:nucleotide binding"/>
    <property type="evidence" value="ECO:0007669"/>
    <property type="project" value="TreeGrafter"/>
</dbReference>
<dbReference type="CDD" id="cd11740">
    <property type="entry name" value="YajQ_like"/>
    <property type="match status" value="1"/>
</dbReference>
<dbReference type="FunFam" id="3.30.70.860:FF:000004">
    <property type="entry name" value="UPF0234 protein AWC22_11905"/>
    <property type="match status" value="1"/>
</dbReference>
<dbReference type="Gene3D" id="3.30.70.860">
    <property type="match status" value="1"/>
</dbReference>
<dbReference type="Gene3D" id="3.30.70.990">
    <property type="entry name" value="YajQ-like, domain 2"/>
    <property type="match status" value="1"/>
</dbReference>
<dbReference type="HAMAP" id="MF_00632">
    <property type="entry name" value="YajQ"/>
    <property type="match status" value="1"/>
</dbReference>
<dbReference type="InterPro" id="IPR007551">
    <property type="entry name" value="DUF520"/>
</dbReference>
<dbReference type="InterPro" id="IPR035571">
    <property type="entry name" value="UPF0234-like_C"/>
</dbReference>
<dbReference type="InterPro" id="IPR035570">
    <property type="entry name" value="UPF0234_N"/>
</dbReference>
<dbReference type="InterPro" id="IPR036183">
    <property type="entry name" value="YajQ-like_sf"/>
</dbReference>
<dbReference type="NCBIfam" id="NF003819">
    <property type="entry name" value="PRK05412.1"/>
    <property type="match status" value="1"/>
</dbReference>
<dbReference type="PANTHER" id="PTHR30476">
    <property type="entry name" value="UPF0234 PROTEIN YAJQ"/>
    <property type="match status" value="1"/>
</dbReference>
<dbReference type="PANTHER" id="PTHR30476:SF0">
    <property type="entry name" value="UPF0234 PROTEIN YAJQ"/>
    <property type="match status" value="1"/>
</dbReference>
<dbReference type="Pfam" id="PF04461">
    <property type="entry name" value="DUF520"/>
    <property type="match status" value="1"/>
</dbReference>
<dbReference type="SUPFAM" id="SSF89963">
    <property type="entry name" value="YajQ-like"/>
    <property type="match status" value="2"/>
</dbReference>
<reference key="1">
    <citation type="submission" date="2009-03" db="EMBL/GenBank/DDBJ databases">
        <title>Comparison of the complete genome sequences of Rhodococcus erythropolis PR4 and Rhodococcus opacus B4.</title>
        <authorList>
            <person name="Takarada H."/>
            <person name="Sekine M."/>
            <person name="Hosoyama A."/>
            <person name="Yamada R."/>
            <person name="Fujisawa T."/>
            <person name="Omata S."/>
            <person name="Shimizu A."/>
            <person name="Tsukatani N."/>
            <person name="Tanikawa S."/>
            <person name="Fujita N."/>
            <person name="Harayama S."/>
        </authorList>
    </citation>
    <scope>NUCLEOTIDE SEQUENCE [LARGE SCALE GENOMIC DNA]</scope>
    <source>
        <strain>B4</strain>
    </source>
</reference>
<feature type="chain" id="PRO_1000147321" description="Nucleotide-binding protein ROP_16630">
    <location>
        <begin position="1"/>
        <end position="163"/>
    </location>
</feature>
<sequence>MADSSFDVVSKVERQEVDNALHQAGKELSTRFDFRNTGASIEWSGEETITLTADTEERLLAALDVFKEKLIRRDISLKAFDAGEPAQSGKTYKLSGSLVQGITTENAKKITKKIRDEGPKGVKAQIQGDELRVSSKKRDDLQAVISLLKGEDFGIALQFVNYR</sequence>
<name>Y1663_RHOOB</name>
<protein>
    <recommendedName>
        <fullName evidence="1">Nucleotide-binding protein ROP_16630</fullName>
    </recommendedName>
</protein>
<organism>
    <name type="scientific">Rhodococcus opacus (strain B4)</name>
    <dbReference type="NCBI Taxonomy" id="632772"/>
    <lineage>
        <taxon>Bacteria</taxon>
        <taxon>Bacillati</taxon>
        <taxon>Actinomycetota</taxon>
        <taxon>Actinomycetes</taxon>
        <taxon>Mycobacteriales</taxon>
        <taxon>Nocardiaceae</taxon>
        <taxon>Rhodococcus</taxon>
    </lineage>
</organism>
<comment type="function">
    <text evidence="1">Nucleotide-binding protein.</text>
</comment>
<comment type="similarity">
    <text evidence="1">Belongs to the YajQ family.</text>
</comment>
<keyword id="KW-0547">Nucleotide-binding</keyword>
<gene>
    <name type="ordered locus">ROP_16630</name>
</gene>
<proteinExistence type="inferred from homology"/>